<comment type="catalytic activity">
    <reaction evidence="1">
        <text>D-arabinose 5-phosphate + phosphoenolpyruvate + H2O = 3-deoxy-alpha-D-manno-2-octulosonate-8-phosphate + phosphate</text>
        <dbReference type="Rhea" id="RHEA:14053"/>
        <dbReference type="ChEBI" id="CHEBI:15377"/>
        <dbReference type="ChEBI" id="CHEBI:43474"/>
        <dbReference type="ChEBI" id="CHEBI:57693"/>
        <dbReference type="ChEBI" id="CHEBI:58702"/>
        <dbReference type="ChEBI" id="CHEBI:85985"/>
        <dbReference type="EC" id="2.5.1.55"/>
    </reaction>
</comment>
<comment type="pathway">
    <text evidence="1">Carbohydrate biosynthesis; 3-deoxy-D-manno-octulosonate biosynthesis; 3-deoxy-D-manno-octulosonate from D-ribulose 5-phosphate: step 2/3.</text>
</comment>
<comment type="pathway">
    <text evidence="1">Bacterial outer membrane biogenesis; lipopolysaccharide biosynthesis.</text>
</comment>
<comment type="subcellular location">
    <subcellularLocation>
        <location evidence="1">Cytoplasm</location>
    </subcellularLocation>
</comment>
<comment type="similarity">
    <text evidence="1">Belongs to the KdsA family.</text>
</comment>
<name>KDSA_YERPN</name>
<sequence>MKQKVVSIGDINVANDLPFVLFGGMNVLESRDLAMRICEHYVTVTQKLGIPYVFKASFDKANRSSIHSYRGPGLEEGMKIFQELKQQFGVKVITDVHEASQAQPVSEVVDVIQLPAFLARQTDLVEAMARTGAVINVKKPQFVSPGQMGNIVEKFKEAGNDQVILCDRGSNFGYDNLVVDMLGINVMVQATGGHPVIFDVTHALQCRDPFGAASGGRRAQVAELARAGMAVGLAGLFIEAHPEPNSAKCDGPSALPLDKLEPFLVQMKAIDDLVKSFPALDTSK</sequence>
<keyword id="KW-0963">Cytoplasm</keyword>
<keyword id="KW-0448">Lipopolysaccharide biosynthesis</keyword>
<keyword id="KW-0808">Transferase</keyword>
<accession>Q1CJJ7</accession>
<accession>C4GSC5</accession>
<feature type="chain" id="PRO_0000304507" description="2-dehydro-3-deoxyphosphooctonate aldolase">
    <location>
        <begin position="1"/>
        <end position="284"/>
    </location>
</feature>
<organism>
    <name type="scientific">Yersinia pestis bv. Antiqua (strain Nepal516)</name>
    <dbReference type="NCBI Taxonomy" id="377628"/>
    <lineage>
        <taxon>Bacteria</taxon>
        <taxon>Pseudomonadati</taxon>
        <taxon>Pseudomonadota</taxon>
        <taxon>Gammaproteobacteria</taxon>
        <taxon>Enterobacterales</taxon>
        <taxon>Yersiniaceae</taxon>
        <taxon>Yersinia</taxon>
    </lineage>
</organism>
<reference key="1">
    <citation type="journal article" date="2006" name="J. Bacteriol.">
        <title>Complete genome sequence of Yersinia pestis strains Antiqua and Nepal516: evidence of gene reduction in an emerging pathogen.</title>
        <authorList>
            <person name="Chain P.S.G."/>
            <person name="Hu P."/>
            <person name="Malfatti S.A."/>
            <person name="Radnedge L."/>
            <person name="Larimer F."/>
            <person name="Vergez L.M."/>
            <person name="Worsham P."/>
            <person name="Chu M.C."/>
            <person name="Andersen G.L."/>
        </authorList>
    </citation>
    <scope>NUCLEOTIDE SEQUENCE [LARGE SCALE GENOMIC DNA]</scope>
    <source>
        <strain>Nepal516</strain>
    </source>
</reference>
<reference key="2">
    <citation type="submission" date="2009-04" db="EMBL/GenBank/DDBJ databases">
        <title>Yersinia pestis Nepal516A whole genome shotgun sequencing project.</title>
        <authorList>
            <person name="Plunkett G. III"/>
            <person name="Anderson B.D."/>
            <person name="Baumler D.J."/>
            <person name="Burland V."/>
            <person name="Cabot E.L."/>
            <person name="Glasner J.D."/>
            <person name="Mau B."/>
            <person name="Neeno-Eckwall E."/>
            <person name="Perna N.T."/>
            <person name="Munk A.C."/>
            <person name="Tapia R."/>
            <person name="Green L.D."/>
            <person name="Rogers Y.C."/>
            <person name="Detter J.C."/>
            <person name="Bruce D.C."/>
            <person name="Brettin T.S."/>
        </authorList>
    </citation>
    <scope>NUCLEOTIDE SEQUENCE [LARGE SCALE GENOMIC DNA]</scope>
    <source>
        <strain>Nepal516</strain>
    </source>
</reference>
<proteinExistence type="inferred from homology"/>
<protein>
    <recommendedName>
        <fullName evidence="1">2-dehydro-3-deoxyphosphooctonate aldolase</fullName>
        <ecNumber evidence="1">2.5.1.55</ecNumber>
    </recommendedName>
    <alternativeName>
        <fullName evidence="1">3-deoxy-D-manno-octulosonic acid 8-phosphate synthase</fullName>
    </alternativeName>
    <alternativeName>
        <fullName evidence="1">KDO-8-phosphate synthase</fullName>
        <shortName evidence="1">KDO 8-P synthase</shortName>
        <shortName evidence="1">KDOPS</shortName>
    </alternativeName>
    <alternativeName>
        <fullName evidence="1">Phospho-2-dehydro-3-deoxyoctonate aldolase</fullName>
    </alternativeName>
</protein>
<gene>
    <name evidence="1" type="primary">kdsA</name>
    <name type="ordered locus">YPN_1503</name>
    <name type="ORF">YP516_1663</name>
</gene>
<dbReference type="EC" id="2.5.1.55" evidence="1"/>
<dbReference type="EMBL" id="CP000305">
    <property type="protein sequence ID" value="ABG17833.1"/>
    <property type="molecule type" value="Genomic_DNA"/>
</dbReference>
<dbReference type="EMBL" id="ACNQ01000009">
    <property type="protein sequence ID" value="EEO76935.1"/>
    <property type="molecule type" value="Genomic_DNA"/>
</dbReference>
<dbReference type="RefSeq" id="WP_002211232.1">
    <property type="nucleotide sequence ID" value="NZ_ACNQ01000009.1"/>
</dbReference>
<dbReference type="SMR" id="Q1CJJ7"/>
<dbReference type="GeneID" id="96665504"/>
<dbReference type="KEGG" id="ypn:YPN_1503"/>
<dbReference type="HOGENOM" id="CLU_036666_0_0_6"/>
<dbReference type="UniPathway" id="UPA00030"/>
<dbReference type="UniPathway" id="UPA00357">
    <property type="reaction ID" value="UER00474"/>
</dbReference>
<dbReference type="Proteomes" id="UP000008936">
    <property type="component" value="Chromosome"/>
</dbReference>
<dbReference type="GO" id="GO:0005737">
    <property type="term" value="C:cytoplasm"/>
    <property type="evidence" value="ECO:0007669"/>
    <property type="project" value="UniProtKB-SubCell"/>
</dbReference>
<dbReference type="GO" id="GO:0008676">
    <property type="term" value="F:3-deoxy-8-phosphooctulonate synthase activity"/>
    <property type="evidence" value="ECO:0007669"/>
    <property type="project" value="UniProtKB-UniRule"/>
</dbReference>
<dbReference type="GO" id="GO:0019294">
    <property type="term" value="P:keto-3-deoxy-D-manno-octulosonic acid biosynthetic process"/>
    <property type="evidence" value="ECO:0007669"/>
    <property type="project" value="UniProtKB-UniRule"/>
</dbReference>
<dbReference type="FunFam" id="3.20.20.70:FF:000058">
    <property type="entry name" value="2-dehydro-3-deoxyphosphooctonate aldolase"/>
    <property type="match status" value="1"/>
</dbReference>
<dbReference type="Gene3D" id="3.20.20.70">
    <property type="entry name" value="Aldolase class I"/>
    <property type="match status" value="1"/>
</dbReference>
<dbReference type="HAMAP" id="MF_00056">
    <property type="entry name" value="KDO8P_synth"/>
    <property type="match status" value="1"/>
</dbReference>
<dbReference type="InterPro" id="IPR013785">
    <property type="entry name" value="Aldolase_TIM"/>
</dbReference>
<dbReference type="InterPro" id="IPR006218">
    <property type="entry name" value="DAHP1/KDSA"/>
</dbReference>
<dbReference type="InterPro" id="IPR006269">
    <property type="entry name" value="KDO8P_synthase"/>
</dbReference>
<dbReference type="NCBIfam" id="TIGR01362">
    <property type="entry name" value="KDO8P_synth"/>
    <property type="match status" value="1"/>
</dbReference>
<dbReference type="NCBIfam" id="NF003543">
    <property type="entry name" value="PRK05198.1"/>
    <property type="match status" value="1"/>
</dbReference>
<dbReference type="NCBIfam" id="NF009109">
    <property type="entry name" value="PRK12457.1"/>
    <property type="match status" value="1"/>
</dbReference>
<dbReference type="PANTHER" id="PTHR21057">
    <property type="entry name" value="PHOSPHO-2-DEHYDRO-3-DEOXYHEPTONATE ALDOLASE"/>
    <property type="match status" value="1"/>
</dbReference>
<dbReference type="Pfam" id="PF00793">
    <property type="entry name" value="DAHP_synth_1"/>
    <property type="match status" value="1"/>
</dbReference>
<dbReference type="SUPFAM" id="SSF51569">
    <property type="entry name" value="Aldolase"/>
    <property type="match status" value="1"/>
</dbReference>
<evidence type="ECO:0000255" key="1">
    <source>
        <dbReference type="HAMAP-Rule" id="MF_00056"/>
    </source>
</evidence>